<keyword id="KW-0029">Amino-acid transport</keyword>
<keyword id="KW-0072">Autophagy</keyword>
<keyword id="KW-0325">Glycoprotein</keyword>
<keyword id="KW-0472">Membrane</keyword>
<keyword id="KW-1185">Reference proteome</keyword>
<keyword id="KW-0812">Transmembrane</keyword>
<keyword id="KW-1133">Transmembrane helix</keyword>
<keyword id="KW-0813">Transport</keyword>
<keyword id="KW-0926">Vacuole</keyword>
<proteinExistence type="inferred from homology"/>
<accession>A7E7N1</accession>
<gene>
    <name type="primary">atg22-1</name>
    <name type="ORF">SS1G_01309</name>
</gene>
<organism>
    <name type="scientific">Sclerotinia sclerotiorum (strain ATCC 18683 / 1980 / Ss-1)</name>
    <name type="common">White mold</name>
    <name type="synonym">Whetzelinia sclerotiorum</name>
    <dbReference type="NCBI Taxonomy" id="665079"/>
    <lineage>
        <taxon>Eukaryota</taxon>
        <taxon>Fungi</taxon>
        <taxon>Dikarya</taxon>
        <taxon>Ascomycota</taxon>
        <taxon>Pezizomycotina</taxon>
        <taxon>Leotiomycetes</taxon>
        <taxon>Helotiales</taxon>
        <taxon>Sclerotiniaceae</taxon>
        <taxon>Sclerotinia</taxon>
    </lineage>
</organism>
<dbReference type="EMBL" id="CH476622">
    <property type="protein sequence ID" value="EDN96383.1"/>
    <property type="molecule type" value="Genomic_DNA"/>
</dbReference>
<dbReference type="RefSeq" id="XP_001597115.1">
    <property type="nucleotide sequence ID" value="XM_001597065.1"/>
</dbReference>
<dbReference type="FunCoup" id="A7E7N1">
    <property type="interactions" value="22"/>
</dbReference>
<dbReference type="STRING" id="665079.A7E7N1"/>
<dbReference type="GlyCosmos" id="A7E7N1">
    <property type="glycosylation" value="3 sites, No reported glycans"/>
</dbReference>
<dbReference type="EnsemblFungi" id="EDN96383">
    <property type="protein sequence ID" value="EDN96383"/>
    <property type="gene ID" value="SS1G_01309"/>
</dbReference>
<dbReference type="GeneID" id="5494038"/>
<dbReference type="KEGG" id="ssl:SS1G_01309"/>
<dbReference type="VEuPathDB" id="FungiDB:sscle_01g009780"/>
<dbReference type="eggNOG" id="ENOG502QVD3">
    <property type="taxonomic scope" value="Eukaryota"/>
</dbReference>
<dbReference type="HOGENOM" id="CLU_017518_1_0_1"/>
<dbReference type="InParanoid" id="A7E7N1"/>
<dbReference type="OMA" id="QPWEIFP"/>
<dbReference type="OrthoDB" id="192733at2759"/>
<dbReference type="Proteomes" id="UP000001312">
    <property type="component" value="Unassembled WGS sequence"/>
</dbReference>
<dbReference type="GO" id="GO:0005774">
    <property type="term" value="C:vacuolar membrane"/>
    <property type="evidence" value="ECO:0007669"/>
    <property type="project" value="UniProtKB-SubCell"/>
</dbReference>
<dbReference type="GO" id="GO:0032974">
    <property type="term" value="P:amino acid transmembrane export from vacuole"/>
    <property type="evidence" value="ECO:0000318"/>
    <property type="project" value="GO_Central"/>
</dbReference>
<dbReference type="GO" id="GO:0006914">
    <property type="term" value="P:autophagy"/>
    <property type="evidence" value="ECO:0007669"/>
    <property type="project" value="UniProtKB-KW"/>
</dbReference>
<dbReference type="CDD" id="cd17483">
    <property type="entry name" value="MFS_Atg22_like"/>
    <property type="match status" value="1"/>
</dbReference>
<dbReference type="FunFam" id="1.20.1250.20:FF:000647">
    <property type="entry name" value="Autophagy-related protein"/>
    <property type="match status" value="1"/>
</dbReference>
<dbReference type="Gene3D" id="1.20.1250.20">
    <property type="entry name" value="MFS general substrate transporter like domains"/>
    <property type="match status" value="1"/>
</dbReference>
<dbReference type="InterPro" id="IPR044738">
    <property type="entry name" value="Atg22"/>
</dbReference>
<dbReference type="InterPro" id="IPR024671">
    <property type="entry name" value="Atg22-like"/>
</dbReference>
<dbReference type="InterPro" id="IPR050495">
    <property type="entry name" value="ATG22/LtaA_families"/>
</dbReference>
<dbReference type="InterPro" id="IPR036259">
    <property type="entry name" value="MFS_trans_sf"/>
</dbReference>
<dbReference type="PANTHER" id="PTHR23519">
    <property type="entry name" value="AUTOPHAGY-RELATED PROTEIN 22"/>
    <property type="match status" value="1"/>
</dbReference>
<dbReference type="PANTHER" id="PTHR23519:SF3">
    <property type="entry name" value="AUTOPHAGY-RELATED PROTEIN 22-2"/>
    <property type="match status" value="1"/>
</dbReference>
<dbReference type="Pfam" id="PF11700">
    <property type="entry name" value="ATG22"/>
    <property type="match status" value="1"/>
</dbReference>
<dbReference type="SUPFAM" id="SSF103473">
    <property type="entry name" value="MFS general substrate transporter"/>
    <property type="match status" value="1"/>
</dbReference>
<feature type="chain" id="PRO_0000318033" description="Autophagy-related protein 22-1">
    <location>
        <begin position="1"/>
        <end position="598"/>
    </location>
</feature>
<feature type="transmembrane region" description="Helical" evidence="2">
    <location>
        <begin position="28"/>
        <end position="48"/>
    </location>
</feature>
<feature type="transmembrane region" description="Helical" evidence="2">
    <location>
        <begin position="111"/>
        <end position="131"/>
    </location>
</feature>
<feature type="transmembrane region" description="Helical" evidence="2">
    <location>
        <begin position="159"/>
        <end position="179"/>
    </location>
</feature>
<feature type="transmembrane region" description="Helical" evidence="2">
    <location>
        <begin position="182"/>
        <end position="202"/>
    </location>
</feature>
<feature type="transmembrane region" description="Helical" evidence="2">
    <location>
        <begin position="263"/>
        <end position="283"/>
    </location>
</feature>
<feature type="transmembrane region" description="Helical" evidence="2">
    <location>
        <begin position="297"/>
        <end position="317"/>
    </location>
</feature>
<feature type="transmembrane region" description="Helical" evidence="2">
    <location>
        <begin position="363"/>
        <end position="383"/>
    </location>
</feature>
<feature type="transmembrane region" description="Helical" evidence="2">
    <location>
        <begin position="400"/>
        <end position="420"/>
    </location>
</feature>
<feature type="transmembrane region" description="Helical" evidence="2">
    <location>
        <begin position="431"/>
        <end position="451"/>
    </location>
</feature>
<feature type="transmembrane region" description="Helical" evidence="2">
    <location>
        <begin position="465"/>
        <end position="485"/>
    </location>
</feature>
<feature type="transmembrane region" description="Helical" evidence="2">
    <location>
        <begin position="489"/>
        <end position="509"/>
    </location>
</feature>
<feature type="transmembrane region" description="Helical" evidence="2">
    <location>
        <begin position="534"/>
        <end position="554"/>
    </location>
</feature>
<feature type="region of interest" description="Disordered" evidence="3">
    <location>
        <begin position="1"/>
        <end position="20"/>
    </location>
</feature>
<feature type="region of interest" description="Disordered" evidence="3">
    <location>
        <begin position="207"/>
        <end position="238"/>
    </location>
</feature>
<feature type="region of interest" description="Disordered" evidence="3">
    <location>
        <begin position="575"/>
        <end position="598"/>
    </location>
</feature>
<feature type="compositionally biased region" description="Low complexity" evidence="3">
    <location>
        <begin position="212"/>
        <end position="224"/>
    </location>
</feature>
<feature type="compositionally biased region" description="Basic and acidic residues" evidence="3">
    <location>
        <begin position="227"/>
        <end position="238"/>
    </location>
</feature>
<feature type="compositionally biased region" description="Basic and acidic residues" evidence="3">
    <location>
        <begin position="585"/>
        <end position="598"/>
    </location>
</feature>
<feature type="glycosylation site" description="N-linked (GlcNAc...) asparagine" evidence="2">
    <location>
        <position position="74"/>
    </location>
</feature>
<feature type="glycosylation site" description="N-linked (GlcNAc...) asparagine" evidence="2">
    <location>
        <position position="80"/>
    </location>
</feature>
<feature type="glycosylation site" description="N-linked (GlcNAc...) asparagine" evidence="2">
    <location>
        <position position="285"/>
    </location>
</feature>
<comment type="function">
    <text evidence="1">Vacuolar effluxer which mediate the efflux of amino acids resulting from autophagic degradation. The release of autophagic amino acids allows the maintenance of protein synthesis and viability during nitrogen starvation (By similarity).</text>
</comment>
<comment type="subcellular location">
    <subcellularLocation>
        <location evidence="1">Vacuole membrane</location>
        <topology evidence="1">Multi-pass membrane protein</topology>
    </subcellularLocation>
    <text evidence="1">Vacuole and punctate structures.</text>
</comment>
<comment type="similarity">
    <text evidence="4">Belongs to the ATG22 family.</text>
</comment>
<evidence type="ECO:0000250" key="1"/>
<evidence type="ECO:0000255" key="2"/>
<evidence type="ECO:0000256" key="3">
    <source>
        <dbReference type="SAM" id="MobiDB-lite"/>
    </source>
</evidence>
<evidence type="ECO:0000305" key="4"/>
<reference key="1">
    <citation type="journal article" date="2011" name="PLoS Genet.">
        <title>Genomic analysis of the necrotrophic fungal pathogens Sclerotinia sclerotiorum and Botrytis cinerea.</title>
        <authorList>
            <person name="Amselem J."/>
            <person name="Cuomo C.A."/>
            <person name="van Kan J.A.L."/>
            <person name="Viaud M."/>
            <person name="Benito E.P."/>
            <person name="Couloux A."/>
            <person name="Coutinho P.M."/>
            <person name="de Vries R.P."/>
            <person name="Dyer P.S."/>
            <person name="Fillinger S."/>
            <person name="Fournier E."/>
            <person name="Gout L."/>
            <person name="Hahn M."/>
            <person name="Kohn L."/>
            <person name="Lapalu N."/>
            <person name="Plummer K.M."/>
            <person name="Pradier J.-M."/>
            <person name="Quevillon E."/>
            <person name="Sharon A."/>
            <person name="Simon A."/>
            <person name="ten Have A."/>
            <person name="Tudzynski B."/>
            <person name="Tudzynski P."/>
            <person name="Wincker P."/>
            <person name="Andrew M."/>
            <person name="Anthouard V."/>
            <person name="Beever R.E."/>
            <person name="Beffa R."/>
            <person name="Benoit I."/>
            <person name="Bouzid O."/>
            <person name="Brault B."/>
            <person name="Chen Z."/>
            <person name="Choquer M."/>
            <person name="Collemare J."/>
            <person name="Cotton P."/>
            <person name="Danchin E.G."/>
            <person name="Da Silva C."/>
            <person name="Gautier A."/>
            <person name="Giraud C."/>
            <person name="Giraud T."/>
            <person name="Gonzalez C."/>
            <person name="Grossetete S."/>
            <person name="Gueldener U."/>
            <person name="Henrissat B."/>
            <person name="Howlett B.J."/>
            <person name="Kodira C."/>
            <person name="Kretschmer M."/>
            <person name="Lappartient A."/>
            <person name="Leroch M."/>
            <person name="Levis C."/>
            <person name="Mauceli E."/>
            <person name="Neuveglise C."/>
            <person name="Oeser B."/>
            <person name="Pearson M."/>
            <person name="Poulain J."/>
            <person name="Poussereau N."/>
            <person name="Quesneville H."/>
            <person name="Rascle C."/>
            <person name="Schumacher J."/>
            <person name="Segurens B."/>
            <person name="Sexton A."/>
            <person name="Silva E."/>
            <person name="Sirven C."/>
            <person name="Soanes D.M."/>
            <person name="Talbot N.J."/>
            <person name="Templeton M."/>
            <person name="Yandava C."/>
            <person name="Yarden O."/>
            <person name="Zeng Q."/>
            <person name="Rollins J.A."/>
            <person name="Lebrun M.-H."/>
            <person name="Dickman M."/>
        </authorList>
    </citation>
    <scope>NUCLEOTIDE SEQUENCE [LARGE SCALE GENOMIC DNA]</scope>
    <source>
        <strain>ATCC 18683 / 1980 / Ss-1</strain>
    </source>
</reference>
<protein>
    <recommendedName>
        <fullName>Autophagy-related protein 22-1</fullName>
    </recommendedName>
</protein>
<name>AT221_SCLS1</name>
<sequence length="598" mass="64598">MEDGGAGLRAPRYPAEDTSPTTDRELRGFFCYGLAAEVFAVCAVGSFLPVTLEQLAREQGVLFIDKVTPCTAKNATVIANATVNALMSRAEGSDTHQCIINVFGAELTTASFAMYTFSASVFMQALALVSVSSVADHGTWRKKLLAGFGLTGSVSAMLFLLVVPQIFVVGSFLTVICVVCLGCSFVILNSYLPLLVLNHPVVQSDEDHPTASSSIPLQPISPQRSSRKSEESLHQVNRKEVDIGSKADSSDLQLSTKISSKGVGIGYMAAVSVQVICILILYIMNKTGVSSTLPLRTVLFFVGSWWLTFTIPSVMWLRDRPGPPLPTALYEGRAFVRTCMSYTIFAWKSLWKTVKVAVKLRQVLLFLIAWFLLSDAVATISATAILFARTELQMGTVAVALLSIIATSSGIIGATVWPIISKRFTLKTNHIIVCCLLLLELVPLYGLLGFLPFVQAWGVGGLQKWYEIYPLGIIHGMVMGGLSSYCRSFYGLLIPPGSEAAFYALFAITDKGSSAVGPAIVGKIVDATGQIRPAFGFLAVLIALPIPLIWMVDVEKGQEDAIRMAGLMKTTDDGHEDFESFEGSSDGHEAEGLMRDHD</sequence>